<name>Y1146_PASMU</name>
<keyword id="KW-1185">Reference proteome</keyword>
<reference key="1">
    <citation type="journal article" date="2001" name="Proc. Natl. Acad. Sci. U.S.A.">
        <title>Complete genomic sequence of Pasteurella multocida Pm70.</title>
        <authorList>
            <person name="May B.J."/>
            <person name="Zhang Q."/>
            <person name="Li L.L."/>
            <person name="Paustian M.L."/>
            <person name="Whittam T.S."/>
            <person name="Kapur V."/>
        </authorList>
    </citation>
    <scope>NUCLEOTIDE SEQUENCE [LARGE SCALE GENOMIC DNA]</scope>
    <source>
        <strain>Pm70</strain>
    </source>
</reference>
<organism>
    <name type="scientific">Pasteurella multocida (strain Pm70)</name>
    <dbReference type="NCBI Taxonomy" id="272843"/>
    <lineage>
        <taxon>Bacteria</taxon>
        <taxon>Pseudomonadati</taxon>
        <taxon>Pseudomonadota</taxon>
        <taxon>Gammaproteobacteria</taxon>
        <taxon>Pasteurellales</taxon>
        <taxon>Pasteurellaceae</taxon>
        <taxon>Pasteurella</taxon>
    </lineage>
</organism>
<sequence length="241" mass="27100">MRILAAGSLRQPFTLWQQALIQQYQLQVEIEFGPAGLLCQRIEQGEKVDLFASANDVHPRSLQARYPHIQLVPFATNRLCLITKKSVITHHDENWLTLLMSPHLRLGVSTPKADPCGDYTLALFSNIEKRHMGYGSKLKEKAMAIVGGPDSITIPTGRNTAEWLFEQNYADLFIGYASNHQSLRQHSDICVLDIPDEYNVRANYTLAAFTAEALRLVDSLLCLTCGQKYLRDCGFLPANHT</sequence>
<gene>
    <name type="ordered locus">PM1146</name>
</gene>
<accession>P57911</accession>
<protein>
    <recommendedName>
        <fullName>Uncharacterized protein PM1146</fullName>
    </recommendedName>
</protein>
<feature type="chain" id="PRO_0000159730" description="Uncharacterized protein PM1146">
    <location>
        <begin position="1"/>
        <end position="241"/>
    </location>
</feature>
<proteinExistence type="predicted"/>
<dbReference type="EMBL" id="AE004439">
    <property type="protein sequence ID" value="AAK03230.1"/>
    <property type="molecule type" value="Genomic_DNA"/>
</dbReference>
<dbReference type="RefSeq" id="WP_010907043.1">
    <property type="nucleotide sequence ID" value="NC_002663.1"/>
</dbReference>
<dbReference type="SMR" id="P57911"/>
<dbReference type="STRING" id="272843.PM1146"/>
<dbReference type="EnsemblBacteria" id="AAK03230">
    <property type="protein sequence ID" value="AAK03230"/>
    <property type="gene ID" value="PM1146"/>
</dbReference>
<dbReference type="KEGG" id="pmu:PM1146"/>
<dbReference type="PATRIC" id="fig|272843.6.peg.1157"/>
<dbReference type="HOGENOM" id="CLU_083611_0_0_6"/>
<dbReference type="OrthoDB" id="516817at2"/>
<dbReference type="Proteomes" id="UP000000809">
    <property type="component" value="Chromosome"/>
</dbReference>
<dbReference type="GO" id="GO:0030973">
    <property type="term" value="F:molybdate ion binding"/>
    <property type="evidence" value="ECO:0007669"/>
    <property type="project" value="TreeGrafter"/>
</dbReference>
<dbReference type="GO" id="GO:0015689">
    <property type="term" value="P:molybdate ion transport"/>
    <property type="evidence" value="ECO:0007669"/>
    <property type="project" value="TreeGrafter"/>
</dbReference>
<dbReference type="CDD" id="cd13541">
    <property type="entry name" value="PBP2_ModA_like_2"/>
    <property type="match status" value="1"/>
</dbReference>
<dbReference type="Gene3D" id="3.40.190.10">
    <property type="entry name" value="Periplasmic binding protein-like II"/>
    <property type="match status" value="2"/>
</dbReference>
<dbReference type="InterPro" id="IPR050682">
    <property type="entry name" value="ModA/WtpA"/>
</dbReference>
<dbReference type="NCBIfam" id="NF002918">
    <property type="entry name" value="PRK03537.1-4"/>
    <property type="match status" value="1"/>
</dbReference>
<dbReference type="PANTHER" id="PTHR30632">
    <property type="entry name" value="MOLYBDATE-BINDING PERIPLASMIC PROTEIN"/>
    <property type="match status" value="1"/>
</dbReference>
<dbReference type="PANTHER" id="PTHR30632:SF0">
    <property type="entry name" value="SULFATE-BINDING PROTEIN"/>
    <property type="match status" value="1"/>
</dbReference>
<dbReference type="Pfam" id="PF13531">
    <property type="entry name" value="SBP_bac_11"/>
    <property type="match status" value="1"/>
</dbReference>
<dbReference type="SUPFAM" id="SSF53850">
    <property type="entry name" value="Periplasmic binding protein-like II"/>
    <property type="match status" value="1"/>
</dbReference>